<organism>
    <name type="scientific">Pseudomonas fluorescens (strain ATCC BAA-477 / NRRL B-23932 / Pf-5)</name>
    <dbReference type="NCBI Taxonomy" id="220664"/>
    <lineage>
        <taxon>Bacteria</taxon>
        <taxon>Pseudomonadati</taxon>
        <taxon>Pseudomonadota</taxon>
        <taxon>Gammaproteobacteria</taxon>
        <taxon>Pseudomonadales</taxon>
        <taxon>Pseudomonadaceae</taxon>
        <taxon>Pseudomonas</taxon>
    </lineage>
</organism>
<comment type="function">
    <text evidence="1">Involved in urease metallocenter assembly. Binds nickel. Probably functions as a nickel donor during metallocenter assembly.</text>
</comment>
<comment type="subcellular location">
    <subcellularLocation>
        <location evidence="1">Cytoplasm</location>
    </subcellularLocation>
</comment>
<comment type="similarity">
    <text evidence="1">Belongs to the UreE family.</text>
</comment>
<sequence length="166" mass="18652">MLVIHRRTTPQATWSAELHLTYEARSKSRLRCFSAAGEDVGLFLERGQPPLHDGEFLEAEDGRIVKVCARPEALLHVTCRNAFELTRAAYHLGNRHVALQVGDGWLRLLDDYVLKAMLEQLGASTAPLEAPFQPEHGAYGGGHHHSRHGDEDFNYPPRLHQFGVRP</sequence>
<protein>
    <recommendedName>
        <fullName evidence="1">Urease accessory protein UreE</fullName>
    </recommendedName>
</protein>
<evidence type="ECO:0000255" key="1">
    <source>
        <dbReference type="HAMAP-Rule" id="MF_00822"/>
    </source>
</evidence>
<evidence type="ECO:0000256" key="2">
    <source>
        <dbReference type="SAM" id="MobiDB-lite"/>
    </source>
</evidence>
<proteinExistence type="inferred from homology"/>
<name>UREE_PSEF5</name>
<gene>
    <name evidence="1" type="primary">ureE</name>
    <name type="ordered locus">PFL_0609</name>
</gene>
<keyword id="KW-0143">Chaperone</keyword>
<keyword id="KW-0963">Cytoplasm</keyword>
<keyword id="KW-0533">Nickel</keyword>
<keyword id="KW-0996">Nickel insertion</keyword>
<dbReference type="EMBL" id="CP000076">
    <property type="protein sequence ID" value="AAY96016.1"/>
    <property type="molecule type" value="Genomic_DNA"/>
</dbReference>
<dbReference type="RefSeq" id="WP_011058977.1">
    <property type="nucleotide sequence ID" value="NC_004129.6"/>
</dbReference>
<dbReference type="SMR" id="Q4KJ32"/>
<dbReference type="STRING" id="220664.PFL_0609"/>
<dbReference type="KEGG" id="pfl:PFL_0609"/>
<dbReference type="PATRIC" id="fig|220664.5.peg.625"/>
<dbReference type="eggNOG" id="COG2371">
    <property type="taxonomic scope" value="Bacteria"/>
</dbReference>
<dbReference type="HOGENOM" id="CLU_093757_2_0_6"/>
<dbReference type="Proteomes" id="UP000008540">
    <property type="component" value="Chromosome"/>
</dbReference>
<dbReference type="GO" id="GO:0005737">
    <property type="term" value="C:cytoplasm"/>
    <property type="evidence" value="ECO:0007669"/>
    <property type="project" value="UniProtKB-SubCell"/>
</dbReference>
<dbReference type="GO" id="GO:0016151">
    <property type="term" value="F:nickel cation binding"/>
    <property type="evidence" value="ECO:0007669"/>
    <property type="project" value="UniProtKB-UniRule"/>
</dbReference>
<dbReference type="GO" id="GO:0051082">
    <property type="term" value="F:unfolded protein binding"/>
    <property type="evidence" value="ECO:0007669"/>
    <property type="project" value="UniProtKB-UniRule"/>
</dbReference>
<dbReference type="GO" id="GO:0006457">
    <property type="term" value="P:protein folding"/>
    <property type="evidence" value="ECO:0007669"/>
    <property type="project" value="InterPro"/>
</dbReference>
<dbReference type="GO" id="GO:0065003">
    <property type="term" value="P:protein-containing complex assembly"/>
    <property type="evidence" value="ECO:0007669"/>
    <property type="project" value="InterPro"/>
</dbReference>
<dbReference type="GO" id="GO:0019627">
    <property type="term" value="P:urea metabolic process"/>
    <property type="evidence" value="ECO:0007669"/>
    <property type="project" value="InterPro"/>
</dbReference>
<dbReference type="CDD" id="cd00571">
    <property type="entry name" value="UreE"/>
    <property type="match status" value="1"/>
</dbReference>
<dbReference type="Gene3D" id="2.60.260.20">
    <property type="entry name" value="Urease metallochaperone UreE, N-terminal domain"/>
    <property type="match status" value="1"/>
</dbReference>
<dbReference type="Gene3D" id="3.30.70.790">
    <property type="entry name" value="UreE, C-terminal domain"/>
    <property type="match status" value="1"/>
</dbReference>
<dbReference type="HAMAP" id="MF_00822">
    <property type="entry name" value="UreE"/>
    <property type="match status" value="1"/>
</dbReference>
<dbReference type="InterPro" id="IPR012406">
    <property type="entry name" value="UreE"/>
</dbReference>
<dbReference type="InterPro" id="IPR007864">
    <property type="entry name" value="UreE_C_dom"/>
</dbReference>
<dbReference type="InterPro" id="IPR004029">
    <property type="entry name" value="UreE_N"/>
</dbReference>
<dbReference type="InterPro" id="IPR036118">
    <property type="entry name" value="UreE_N_sf"/>
</dbReference>
<dbReference type="NCBIfam" id="NF009751">
    <property type="entry name" value="PRK13261.1-1"/>
    <property type="match status" value="1"/>
</dbReference>
<dbReference type="NCBIfam" id="NF009753">
    <property type="entry name" value="PRK13261.1-5"/>
    <property type="match status" value="1"/>
</dbReference>
<dbReference type="Pfam" id="PF05194">
    <property type="entry name" value="UreE_C"/>
    <property type="match status" value="1"/>
</dbReference>
<dbReference type="Pfam" id="PF02814">
    <property type="entry name" value="UreE_N"/>
    <property type="match status" value="1"/>
</dbReference>
<dbReference type="PIRSF" id="PIRSF036402">
    <property type="entry name" value="Ureas_acces_UreE"/>
    <property type="match status" value="1"/>
</dbReference>
<dbReference type="SMART" id="SM00988">
    <property type="entry name" value="UreE_N"/>
    <property type="match status" value="1"/>
</dbReference>
<dbReference type="SUPFAM" id="SSF69737">
    <property type="entry name" value="Urease metallochaperone UreE, C-terminal domain"/>
    <property type="match status" value="1"/>
</dbReference>
<dbReference type="SUPFAM" id="SSF69287">
    <property type="entry name" value="Urease metallochaperone UreE, N-terminal domain"/>
    <property type="match status" value="1"/>
</dbReference>
<reference key="1">
    <citation type="journal article" date="2005" name="Nat. Biotechnol.">
        <title>Complete genome sequence of the plant commensal Pseudomonas fluorescens Pf-5.</title>
        <authorList>
            <person name="Paulsen I.T."/>
            <person name="Press C.M."/>
            <person name="Ravel J."/>
            <person name="Kobayashi D.Y."/>
            <person name="Myers G.S.A."/>
            <person name="Mavrodi D.V."/>
            <person name="DeBoy R.T."/>
            <person name="Seshadri R."/>
            <person name="Ren Q."/>
            <person name="Madupu R."/>
            <person name="Dodson R.J."/>
            <person name="Durkin A.S."/>
            <person name="Brinkac L.M."/>
            <person name="Daugherty S.C."/>
            <person name="Sullivan S.A."/>
            <person name="Rosovitz M.J."/>
            <person name="Gwinn M.L."/>
            <person name="Zhou L."/>
            <person name="Schneider D.J."/>
            <person name="Cartinhour S.W."/>
            <person name="Nelson W.C."/>
            <person name="Weidman J."/>
            <person name="Watkins K."/>
            <person name="Tran K."/>
            <person name="Khouri H."/>
            <person name="Pierson E.A."/>
            <person name="Pierson L.S. III"/>
            <person name="Thomashow L.S."/>
            <person name="Loper J.E."/>
        </authorList>
    </citation>
    <scope>NUCLEOTIDE SEQUENCE [LARGE SCALE GENOMIC DNA]</scope>
    <source>
        <strain>ATCC BAA-477 / NRRL B-23932 / Pf-5</strain>
    </source>
</reference>
<accession>Q4KJ32</accession>
<feature type="chain" id="PRO_0000223422" description="Urease accessory protein UreE">
    <location>
        <begin position="1"/>
        <end position="166"/>
    </location>
</feature>
<feature type="region of interest" description="Disordered" evidence="2">
    <location>
        <begin position="132"/>
        <end position="156"/>
    </location>
</feature>